<gene>
    <name evidence="1" type="primary">ruvC</name>
    <name type="ordered locus">BceJ2315_32760</name>
    <name type="ORF">BCAL3337</name>
</gene>
<proteinExistence type="inferred from homology"/>
<evidence type="ECO:0000255" key="1">
    <source>
        <dbReference type="HAMAP-Rule" id="MF_00034"/>
    </source>
</evidence>
<accession>B4EES5</accession>
<name>RUVC_BURCJ</name>
<keyword id="KW-0963">Cytoplasm</keyword>
<keyword id="KW-0227">DNA damage</keyword>
<keyword id="KW-0233">DNA recombination</keyword>
<keyword id="KW-0234">DNA repair</keyword>
<keyword id="KW-0238">DNA-binding</keyword>
<keyword id="KW-0255">Endonuclease</keyword>
<keyword id="KW-0378">Hydrolase</keyword>
<keyword id="KW-0460">Magnesium</keyword>
<keyword id="KW-0479">Metal-binding</keyword>
<keyword id="KW-0540">Nuclease</keyword>
<reference key="1">
    <citation type="journal article" date="2009" name="J. Bacteriol.">
        <title>The genome of Burkholderia cenocepacia J2315, an epidemic pathogen of cystic fibrosis patients.</title>
        <authorList>
            <person name="Holden M.T."/>
            <person name="Seth-Smith H.M."/>
            <person name="Crossman L.C."/>
            <person name="Sebaihia M."/>
            <person name="Bentley S.D."/>
            <person name="Cerdeno-Tarraga A.M."/>
            <person name="Thomson N.R."/>
            <person name="Bason N."/>
            <person name="Quail M.A."/>
            <person name="Sharp S."/>
            <person name="Cherevach I."/>
            <person name="Churcher C."/>
            <person name="Goodhead I."/>
            <person name="Hauser H."/>
            <person name="Holroyd N."/>
            <person name="Mungall K."/>
            <person name="Scott P."/>
            <person name="Walker D."/>
            <person name="White B."/>
            <person name="Rose H."/>
            <person name="Iversen P."/>
            <person name="Mil-Homens D."/>
            <person name="Rocha E.P."/>
            <person name="Fialho A.M."/>
            <person name="Baldwin A."/>
            <person name="Dowson C."/>
            <person name="Barrell B.G."/>
            <person name="Govan J.R."/>
            <person name="Vandamme P."/>
            <person name="Hart C.A."/>
            <person name="Mahenthiralingam E."/>
            <person name="Parkhill J."/>
        </authorList>
    </citation>
    <scope>NUCLEOTIDE SEQUENCE [LARGE SCALE GENOMIC DNA]</scope>
    <source>
        <strain>ATCC BAA-245 / DSM 16553 / LMG 16656 / NCTC 13227 / J2315 / CF5610</strain>
    </source>
</reference>
<organism>
    <name type="scientific">Burkholderia cenocepacia (strain ATCC BAA-245 / DSM 16553 / LMG 16656 / NCTC 13227 / J2315 / CF5610)</name>
    <name type="common">Burkholderia cepacia (strain J2315)</name>
    <dbReference type="NCBI Taxonomy" id="216591"/>
    <lineage>
        <taxon>Bacteria</taxon>
        <taxon>Pseudomonadati</taxon>
        <taxon>Pseudomonadota</taxon>
        <taxon>Betaproteobacteria</taxon>
        <taxon>Burkholderiales</taxon>
        <taxon>Burkholderiaceae</taxon>
        <taxon>Burkholderia</taxon>
        <taxon>Burkholderia cepacia complex</taxon>
    </lineage>
</organism>
<feature type="chain" id="PRO_1000090507" description="Crossover junction endodeoxyribonuclease RuvC">
    <location>
        <begin position="1"/>
        <end position="180"/>
    </location>
</feature>
<feature type="active site" evidence="1">
    <location>
        <position position="7"/>
    </location>
</feature>
<feature type="active site" evidence="1">
    <location>
        <position position="66"/>
    </location>
</feature>
<feature type="active site" evidence="1">
    <location>
        <position position="138"/>
    </location>
</feature>
<feature type="binding site" evidence="1">
    <location>
        <position position="7"/>
    </location>
    <ligand>
        <name>Mg(2+)</name>
        <dbReference type="ChEBI" id="CHEBI:18420"/>
        <label>1</label>
    </ligand>
</feature>
<feature type="binding site" evidence="1">
    <location>
        <position position="66"/>
    </location>
    <ligand>
        <name>Mg(2+)</name>
        <dbReference type="ChEBI" id="CHEBI:18420"/>
        <label>2</label>
    </ligand>
</feature>
<feature type="binding site" evidence="1">
    <location>
        <position position="138"/>
    </location>
    <ligand>
        <name>Mg(2+)</name>
        <dbReference type="ChEBI" id="CHEBI:18420"/>
        <label>1</label>
    </ligand>
</feature>
<dbReference type="EC" id="3.1.21.10" evidence="1"/>
<dbReference type="EMBL" id="AM747720">
    <property type="protein sequence ID" value="CAR53660.1"/>
    <property type="molecule type" value="Genomic_DNA"/>
</dbReference>
<dbReference type="RefSeq" id="WP_006476894.1">
    <property type="nucleotide sequence ID" value="NC_011000.1"/>
</dbReference>
<dbReference type="SMR" id="B4EES5"/>
<dbReference type="GeneID" id="56557126"/>
<dbReference type="KEGG" id="bcj:BCAL3337"/>
<dbReference type="eggNOG" id="COG0817">
    <property type="taxonomic scope" value="Bacteria"/>
</dbReference>
<dbReference type="HOGENOM" id="CLU_091257_2_0_4"/>
<dbReference type="BioCyc" id="BCEN216591:G1G1V-3713-MONOMER"/>
<dbReference type="Proteomes" id="UP000001035">
    <property type="component" value="Chromosome 1"/>
</dbReference>
<dbReference type="GO" id="GO:0005737">
    <property type="term" value="C:cytoplasm"/>
    <property type="evidence" value="ECO:0007669"/>
    <property type="project" value="UniProtKB-SubCell"/>
</dbReference>
<dbReference type="GO" id="GO:0048476">
    <property type="term" value="C:Holliday junction resolvase complex"/>
    <property type="evidence" value="ECO:0007669"/>
    <property type="project" value="UniProtKB-UniRule"/>
</dbReference>
<dbReference type="GO" id="GO:0008821">
    <property type="term" value="F:crossover junction DNA endonuclease activity"/>
    <property type="evidence" value="ECO:0007669"/>
    <property type="project" value="UniProtKB-UniRule"/>
</dbReference>
<dbReference type="GO" id="GO:0003677">
    <property type="term" value="F:DNA binding"/>
    <property type="evidence" value="ECO:0007669"/>
    <property type="project" value="UniProtKB-KW"/>
</dbReference>
<dbReference type="GO" id="GO:0000287">
    <property type="term" value="F:magnesium ion binding"/>
    <property type="evidence" value="ECO:0007669"/>
    <property type="project" value="UniProtKB-UniRule"/>
</dbReference>
<dbReference type="GO" id="GO:0006310">
    <property type="term" value="P:DNA recombination"/>
    <property type="evidence" value="ECO:0007669"/>
    <property type="project" value="UniProtKB-UniRule"/>
</dbReference>
<dbReference type="GO" id="GO:0006281">
    <property type="term" value="P:DNA repair"/>
    <property type="evidence" value="ECO:0007669"/>
    <property type="project" value="UniProtKB-UniRule"/>
</dbReference>
<dbReference type="CDD" id="cd16962">
    <property type="entry name" value="RuvC"/>
    <property type="match status" value="1"/>
</dbReference>
<dbReference type="FunFam" id="3.30.420.10:FF:000002">
    <property type="entry name" value="Crossover junction endodeoxyribonuclease RuvC"/>
    <property type="match status" value="1"/>
</dbReference>
<dbReference type="Gene3D" id="3.30.420.10">
    <property type="entry name" value="Ribonuclease H-like superfamily/Ribonuclease H"/>
    <property type="match status" value="1"/>
</dbReference>
<dbReference type="HAMAP" id="MF_00034">
    <property type="entry name" value="RuvC"/>
    <property type="match status" value="1"/>
</dbReference>
<dbReference type="InterPro" id="IPR012337">
    <property type="entry name" value="RNaseH-like_sf"/>
</dbReference>
<dbReference type="InterPro" id="IPR036397">
    <property type="entry name" value="RNaseH_sf"/>
</dbReference>
<dbReference type="InterPro" id="IPR020563">
    <property type="entry name" value="X-over_junc_endoDNase_Mg_BS"/>
</dbReference>
<dbReference type="InterPro" id="IPR002176">
    <property type="entry name" value="X-over_junc_endoDNase_RuvC"/>
</dbReference>
<dbReference type="NCBIfam" id="TIGR00228">
    <property type="entry name" value="ruvC"/>
    <property type="match status" value="1"/>
</dbReference>
<dbReference type="PANTHER" id="PTHR30194">
    <property type="entry name" value="CROSSOVER JUNCTION ENDODEOXYRIBONUCLEASE RUVC"/>
    <property type="match status" value="1"/>
</dbReference>
<dbReference type="PANTHER" id="PTHR30194:SF3">
    <property type="entry name" value="CROSSOVER JUNCTION ENDODEOXYRIBONUCLEASE RUVC"/>
    <property type="match status" value="1"/>
</dbReference>
<dbReference type="Pfam" id="PF02075">
    <property type="entry name" value="RuvC"/>
    <property type="match status" value="1"/>
</dbReference>
<dbReference type="PRINTS" id="PR00696">
    <property type="entry name" value="RSOLVASERUVC"/>
</dbReference>
<dbReference type="SUPFAM" id="SSF53098">
    <property type="entry name" value="Ribonuclease H-like"/>
    <property type="match status" value="1"/>
</dbReference>
<dbReference type="PROSITE" id="PS01321">
    <property type="entry name" value="RUVC"/>
    <property type="match status" value="1"/>
</dbReference>
<sequence>MRILGIDPGLRVTGFGVIDVSGHRLAYVTSGVIRTPTADLATRLGTIFQGVSTIVREHAPDQAAIEKVFVNVNPQSTLLLGQARGAAICGLVAGGLPVAEYTALQLKQAVVGYGRATKTQMQEMVTRLLNLSGQPGSDAADALGMAICHAHGGNTLSTLGGLAPALAQKGLRVRRGRLVG</sequence>
<comment type="function">
    <text evidence="1">The RuvA-RuvB-RuvC complex processes Holliday junction (HJ) DNA during genetic recombination and DNA repair. Endonuclease that resolves HJ intermediates. Cleaves cruciform DNA by making single-stranded nicks across the HJ at symmetrical positions within the homologous arms, yielding a 5'-phosphate and a 3'-hydroxyl group; requires a central core of homology in the junction. The consensus cleavage sequence is 5'-(A/T)TT(C/G)-3'. Cleavage occurs on the 3'-side of the TT dinucleotide at the point of strand exchange. HJ branch migration catalyzed by RuvA-RuvB allows RuvC to scan DNA until it finds its consensus sequence, where it cleaves and resolves the cruciform DNA.</text>
</comment>
<comment type="catalytic activity">
    <reaction evidence="1">
        <text>Endonucleolytic cleavage at a junction such as a reciprocal single-stranded crossover between two homologous DNA duplexes (Holliday junction).</text>
        <dbReference type="EC" id="3.1.21.10"/>
    </reaction>
</comment>
<comment type="cofactor">
    <cofactor evidence="1">
        <name>Mg(2+)</name>
        <dbReference type="ChEBI" id="CHEBI:18420"/>
    </cofactor>
    <text evidence="1">Binds 2 Mg(2+) ion per subunit.</text>
</comment>
<comment type="subunit">
    <text evidence="1">Homodimer which binds Holliday junction (HJ) DNA. The HJ becomes 2-fold symmetrical on binding to RuvC with unstacked arms; it has a different conformation from HJ DNA in complex with RuvA. In the full resolvosome a probable DNA-RuvA(4)-RuvB(12)-RuvC(2) complex forms which resolves the HJ.</text>
</comment>
<comment type="subcellular location">
    <subcellularLocation>
        <location evidence="1">Cytoplasm</location>
    </subcellularLocation>
</comment>
<comment type="similarity">
    <text evidence="1">Belongs to the RuvC family.</text>
</comment>
<protein>
    <recommendedName>
        <fullName evidence="1">Crossover junction endodeoxyribonuclease RuvC</fullName>
        <ecNumber evidence="1">3.1.21.10</ecNumber>
    </recommendedName>
    <alternativeName>
        <fullName evidence="1">Holliday junction nuclease RuvC</fullName>
    </alternativeName>
    <alternativeName>
        <fullName evidence="1">Holliday junction resolvase RuvC</fullName>
    </alternativeName>
</protein>